<sequence>MKLLFKRYSSSHIGKLIKDSLITPEILPQLGRQPSSHKRLPNNKRTNSITDKWLKDALTRKDKLNEDKLQNVNLRLNVVLTTLQKLRTSDNPALYFALLNRIGTGHIKWLNKSGRQIDAFPPDRLPLEFYHELSNMLYKLSLRSANDKIALAKFSLQLLDRYYFLKTKSLTIEGKFRANIKFLRNCTLLIVKSQSNYYLRAIQRLFAENSEGQLLANLSQLAFYVETSQWTSMLDILSSCVPDSGLRGSKERERAIQLLELFSPCLVKSLKVMIAQNMENEACQILRSLSEWNFHFDQHDSSNLIQLSQNHSCLKVIETMNGLSSTTAVTRQFGLEKLPTDVSLKQSIHILSKDNFEPLKQDSFLQFLSFKLSDLPLNLEVWKKHIKEVDDQMQAESNLHSLRAFFIDMLLCHLSVRKDFDFMLSLVEHIVYEKNLWQPLLLTDNIVGNKENSTFHCLFHGASQDISTKLTLLALYNQLNEIGYQFTSHDFLSMLKVCKNYSDSDFFYFAFYNLLVTQSHKFFLFDKFSDKFSWRLPIQIGDAISEWLSSLEIDIQENTDRVLQITDDVGEWYVENKPFKSEKGTIQPINIMELRKIFGERKTLFHMDSEIFQKSKAKRDKEMRNEALFTANDAEYNFAADVSYAKRVENLFSYIRSKQMQQK</sequence>
<reference key="1">
    <citation type="journal article" date="1996" name="Yeast">
        <title>Nucleotide sequence analysis of a 40 kb segment on the right arm of yeast chromosome XV reveals 18 open reading frames including a new pyruvate kinase and three homologues to chromosome I genes.</title>
        <authorList>
            <person name="Purnelle B."/>
            <person name="Goffeau A."/>
        </authorList>
    </citation>
    <scope>NUCLEOTIDE SEQUENCE [GENOMIC DNA]</scope>
    <source>
        <strain>ATCC 90843 / S288c / FY73</strain>
    </source>
</reference>
<reference key="2">
    <citation type="journal article" date="1997" name="Nature">
        <title>The nucleotide sequence of Saccharomyces cerevisiae chromosome XV.</title>
        <authorList>
            <person name="Dujon B."/>
            <person name="Albermann K."/>
            <person name="Aldea M."/>
            <person name="Alexandraki D."/>
            <person name="Ansorge W."/>
            <person name="Arino J."/>
            <person name="Benes V."/>
            <person name="Bohn C."/>
            <person name="Bolotin-Fukuhara M."/>
            <person name="Bordonne R."/>
            <person name="Boyer J."/>
            <person name="Camasses A."/>
            <person name="Casamayor A."/>
            <person name="Casas C."/>
            <person name="Cheret G."/>
            <person name="Cziepluch C."/>
            <person name="Daignan-Fornier B."/>
            <person name="Dang V.-D."/>
            <person name="de Haan M."/>
            <person name="Delius H."/>
            <person name="Durand P."/>
            <person name="Fairhead C."/>
            <person name="Feldmann H."/>
            <person name="Gaillon L."/>
            <person name="Galisson F."/>
            <person name="Gamo F.-J."/>
            <person name="Gancedo C."/>
            <person name="Goffeau A."/>
            <person name="Goulding S.E."/>
            <person name="Grivell L.A."/>
            <person name="Habbig B."/>
            <person name="Hand N.J."/>
            <person name="Hani J."/>
            <person name="Hattenhorst U."/>
            <person name="Hebling U."/>
            <person name="Hernando Y."/>
            <person name="Herrero E."/>
            <person name="Heumann K."/>
            <person name="Hiesel R."/>
            <person name="Hilger F."/>
            <person name="Hofmann B."/>
            <person name="Hollenberg C.P."/>
            <person name="Hughes B."/>
            <person name="Jauniaux J.-C."/>
            <person name="Kalogeropoulos A."/>
            <person name="Katsoulou C."/>
            <person name="Kordes E."/>
            <person name="Lafuente M.J."/>
            <person name="Landt O."/>
            <person name="Louis E.J."/>
            <person name="Maarse A.C."/>
            <person name="Madania A."/>
            <person name="Mannhaupt G."/>
            <person name="Marck C."/>
            <person name="Martin R.P."/>
            <person name="Mewes H.-W."/>
            <person name="Michaux G."/>
            <person name="Paces V."/>
            <person name="Parle-McDermott A.G."/>
            <person name="Pearson B.M."/>
            <person name="Perrin A."/>
            <person name="Pettersson B."/>
            <person name="Poch O."/>
            <person name="Pohl T.M."/>
            <person name="Poirey R."/>
            <person name="Portetelle D."/>
            <person name="Pujol A."/>
            <person name="Purnelle B."/>
            <person name="Ramezani Rad M."/>
            <person name="Rechmann S."/>
            <person name="Schwager C."/>
            <person name="Schweizer M."/>
            <person name="Sor F."/>
            <person name="Sterky F."/>
            <person name="Tarassov I.A."/>
            <person name="Teodoru C."/>
            <person name="Tettelin H."/>
            <person name="Thierry A."/>
            <person name="Tobiasch E."/>
            <person name="Tzermia M."/>
            <person name="Uhlen M."/>
            <person name="Unseld M."/>
            <person name="Valens M."/>
            <person name="Vandenbol M."/>
            <person name="Vetter I."/>
            <person name="Vlcek C."/>
            <person name="Voet M."/>
            <person name="Volckaert G."/>
            <person name="Voss H."/>
            <person name="Wambutt R."/>
            <person name="Wedler H."/>
            <person name="Wiemann S."/>
            <person name="Winsor B."/>
            <person name="Wolfe K.H."/>
            <person name="Zollner A."/>
            <person name="Zumstein E."/>
            <person name="Kleine K."/>
        </authorList>
    </citation>
    <scope>NUCLEOTIDE SEQUENCE [LARGE SCALE GENOMIC DNA]</scope>
    <source>
        <strain>ATCC 204508 / S288c</strain>
    </source>
</reference>
<reference key="3">
    <citation type="journal article" date="2014" name="G3 (Bethesda)">
        <title>The reference genome sequence of Saccharomyces cerevisiae: Then and now.</title>
        <authorList>
            <person name="Engel S.R."/>
            <person name="Dietrich F.S."/>
            <person name="Fisk D.G."/>
            <person name="Binkley G."/>
            <person name="Balakrishnan R."/>
            <person name="Costanzo M.C."/>
            <person name="Dwight S.S."/>
            <person name="Hitz B.C."/>
            <person name="Karra K."/>
            <person name="Nash R.S."/>
            <person name="Weng S."/>
            <person name="Wong E.D."/>
            <person name="Lloyd P."/>
            <person name="Skrzypek M.S."/>
            <person name="Miyasato S.R."/>
            <person name="Simison M."/>
            <person name="Cherry J.M."/>
        </authorList>
    </citation>
    <scope>GENOME REANNOTATION</scope>
    <source>
        <strain>ATCC 204508 / S288c</strain>
    </source>
</reference>
<reference key="4">
    <citation type="journal article" date="1992" name="Nucleic Acids Res.">
        <title>The MRE4 gene encodes a novel protein kinase homologue required for meiotic recombination in Saccharomyces cerevisiae.</title>
        <authorList>
            <person name="Leem S.-H."/>
            <person name="Ogawa H."/>
        </authorList>
    </citation>
    <scope>NUCLEOTIDE SEQUENCE [GENOMIC DNA] OF 1-219</scope>
</reference>
<reference key="5">
    <citation type="journal article" date="2003" name="Nature">
        <title>Global analysis of protein expression in yeast.</title>
        <authorList>
            <person name="Ghaemmaghami S."/>
            <person name="Huh W.-K."/>
            <person name="Bower K."/>
            <person name="Howson R.W."/>
            <person name="Belle A."/>
            <person name="Dephoure N."/>
            <person name="O'Shea E.K."/>
            <person name="Weissman J.S."/>
        </authorList>
    </citation>
    <scope>LEVEL OF PROTEIN EXPRESSION [LARGE SCALE ANALYSIS]</scope>
</reference>
<evidence type="ECO:0000269" key="1">
    <source>
    </source>
</evidence>
<organism>
    <name type="scientific">Saccharomyces cerevisiae (strain ATCC 204508 / S288c)</name>
    <name type="common">Baker's yeast</name>
    <dbReference type="NCBI Taxonomy" id="559292"/>
    <lineage>
        <taxon>Eukaryota</taxon>
        <taxon>Fungi</taxon>
        <taxon>Dikarya</taxon>
        <taxon>Ascomycota</taxon>
        <taxon>Saccharomycotina</taxon>
        <taxon>Saccharomycetes</taxon>
        <taxon>Saccharomycetales</taxon>
        <taxon>Saccharomycetaceae</taxon>
        <taxon>Saccharomyces</taxon>
    </lineage>
</organism>
<keyword id="KW-1185">Reference proteome</keyword>
<accession>P24720</accession>
<accession>D6W345</accession>
<proteinExistence type="evidence at protein level"/>
<protein>
    <recommendedName>
        <fullName>Protein MNE1</fullName>
    </recommendedName>
</protein>
<name>MNE1_YEAST</name>
<feature type="chain" id="PRO_0000096524" description="Protein MNE1">
    <location>
        <begin position="1"/>
        <end position="663"/>
    </location>
</feature>
<dbReference type="EMBL" id="X95720">
    <property type="protein sequence ID" value="CAA65037.1"/>
    <property type="molecule type" value="Genomic_DNA"/>
</dbReference>
<dbReference type="EMBL" id="Z75258">
    <property type="protein sequence ID" value="CAA99678.1"/>
    <property type="molecule type" value="Genomic_DNA"/>
</dbReference>
<dbReference type="EMBL" id="X63112">
    <property type="protein sequence ID" value="CAA44826.1"/>
    <property type="molecule type" value="Genomic_DNA"/>
</dbReference>
<dbReference type="EMBL" id="BK006948">
    <property type="protein sequence ID" value="DAA11111.1"/>
    <property type="molecule type" value="Genomic_DNA"/>
</dbReference>
<dbReference type="PIR" id="S67259">
    <property type="entry name" value="S67259"/>
</dbReference>
<dbReference type="RefSeq" id="NP_014995.1">
    <property type="nucleotide sequence ID" value="NM_001183770.1"/>
</dbReference>
<dbReference type="BioGRID" id="34735">
    <property type="interactions" value="267"/>
</dbReference>
<dbReference type="DIP" id="DIP-4059N"/>
<dbReference type="FunCoup" id="P24720">
    <property type="interactions" value="29"/>
</dbReference>
<dbReference type="IntAct" id="P24720">
    <property type="interactions" value="3"/>
</dbReference>
<dbReference type="STRING" id="4932.YOR350C"/>
<dbReference type="iPTMnet" id="P24720"/>
<dbReference type="PaxDb" id="4932-YOR350C"/>
<dbReference type="PeptideAtlas" id="P24720"/>
<dbReference type="EnsemblFungi" id="YOR350C_mRNA">
    <property type="protein sequence ID" value="YOR350C"/>
    <property type="gene ID" value="YOR350C"/>
</dbReference>
<dbReference type="GeneID" id="854532"/>
<dbReference type="KEGG" id="sce:YOR350C"/>
<dbReference type="AGR" id="SGD:S000005877"/>
<dbReference type="SGD" id="S000005877">
    <property type="gene designation" value="MNE1"/>
</dbReference>
<dbReference type="VEuPathDB" id="FungiDB:YOR350C"/>
<dbReference type="eggNOG" id="ENOG502S10A">
    <property type="taxonomic scope" value="Eukaryota"/>
</dbReference>
<dbReference type="HOGENOM" id="CLU_029218_0_0_1"/>
<dbReference type="InParanoid" id="P24720"/>
<dbReference type="OMA" id="CLAKFTL"/>
<dbReference type="OrthoDB" id="4041451at2759"/>
<dbReference type="BioGRID-ORCS" id="854532">
    <property type="hits" value="0 hits in 10 CRISPR screens"/>
</dbReference>
<dbReference type="PRO" id="PR:P24720"/>
<dbReference type="Proteomes" id="UP000002311">
    <property type="component" value="Chromosome XV"/>
</dbReference>
<dbReference type="RNAct" id="P24720">
    <property type="molecule type" value="protein"/>
</dbReference>
<dbReference type="GO" id="GO:0005737">
    <property type="term" value="C:cytoplasm"/>
    <property type="evidence" value="ECO:0007005"/>
    <property type="project" value="SGD"/>
</dbReference>
<dbReference type="GO" id="GO:0005759">
    <property type="term" value="C:mitochondrial matrix"/>
    <property type="evidence" value="ECO:0000314"/>
    <property type="project" value="SGD"/>
</dbReference>
<dbReference type="GO" id="GO:0005739">
    <property type="term" value="C:mitochondrion"/>
    <property type="evidence" value="ECO:0007005"/>
    <property type="project" value="SGD"/>
</dbReference>
<dbReference type="GO" id="GO:1990904">
    <property type="term" value="C:ribonucleoprotein complex"/>
    <property type="evidence" value="ECO:0000314"/>
    <property type="project" value="SGD"/>
</dbReference>
<dbReference type="GO" id="GO:0000372">
    <property type="term" value="P:Group I intron splicing"/>
    <property type="evidence" value="ECO:0000315"/>
    <property type="project" value="SGD"/>
</dbReference>
<dbReference type="GO" id="GO:0090615">
    <property type="term" value="P:mitochondrial mRNA processing"/>
    <property type="evidence" value="ECO:0000315"/>
    <property type="project" value="SGD"/>
</dbReference>
<dbReference type="InterPro" id="IPR025694">
    <property type="entry name" value="MNE1"/>
</dbReference>
<dbReference type="Pfam" id="PF13762">
    <property type="entry name" value="MNE1"/>
    <property type="match status" value="1"/>
</dbReference>
<comment type="miscellaneous">
    <text evidence="1">Present with 861 molecules/cell in log phase SD medium.</text>
</comment>
<gene>
    <name type="primary">MNE1</name>
    <name type="synonym">MNE</name>
    <name type="ordered locus">YOR350C</name>
    <name type="ORF">O6353</name>
</gene>